<accession>O32172</accession>
<feature type="chain" id="PRO_0000390790" description="Uncharacterized protein YusF">
    <location>
        <begin position="1"/>
        <end position="146"/>
    </location>
</feature>
<feature type="domain" description="Toprim" evidence="1">
    <location>
        <begin position="31"/>
        <end position="119"/>
    </location>
</feature>
<protein>
    <recommendedName>
        <fullName>Uncharacterized protein YusF</fullName>
    </recommendedName>
</protein>
<dbReference type="EMBL" id="AL009126">
    <property type="protein sequence ID" value="CAB15267.1"/>
    <property type="molecule type" value="Genomic_DNA"/>
</dbReference>
<dbReference type="PIR" id="G70020">
    <property type="entry name" value="G70020"/>
</dbReference>
<dbReference type="RefSeq" id="NP_391157.1">
    <property type="nucleotide sequence ID" value="NC_000964.3"/>
</dbReference>
<dbReference type="RefSeq" id="WP_009968134.1">
    <property type="nucleotide sequence ID" value="NC_000964.3"/>
</dbReference>
<dbReference type="SMR" id="O32172"/>
<dbReference type="STRING" id="224308.BSU32780"/>
<dbReference type="PaxDb" id="224308-BSU32780"/>
<dbReference type="EnsemblBacteria" id="CAB15267">
    <property type="protein sequence ID" value="CAB15267"/>
    <property type="gene ID" value="BSU_32780"/>
</dbReference>
<dbReference type="GeneID" id="936707"/>
<dbReference type="KEGG" id="bsu:BSU32780"/>
<dbReference type="PATRIC" id="fig|224308.43.peg.3431"/>
<dbReference type="eggNOG" id="COG1658">
    <property type="taxonomic scope" value="Bacteria"/>
</dbReference>
<dbReference type="InParanoid" id="O32172"/>
<dbReference type="OrthoDB" id="2417742at2"/>
<dbReference type="PhylomeDB" id="O32172"/>
<dbReference type="BioCyc" id="BSUB:BSU32780-MONOMER"/>
<dbReference type="Proteomes" id="UP000001570">
    <property type="component" value="Chromosome"/>
</dbReference>
<dbReference type="GO" id="GO:0043822">
    <property type="term" value="F:ribonuclease M5 activity"/>
    <property type="evidence" value="ECO:0000318"/>
    <property type="project" value="GO_Central"/>
</dbReference>
<dbReference type="GO" id="GO:0006364">
    <property type="term" value="P:rRNA processing"/>
    <property type="evidence" value="ECO:0000318"/>
    <property type="project" value="GO_Central"/>
</dbReference>
<dbReference type="CDD" id="cd01027">
    <property type="entry name" value="TOPRIM_RNase_M5_like"/>
    <property type="match status" value="1"/>
</dbReference>
<dbReference type="FunFam" id="3.40.1360.10:FF:000005">
    <property type="entry name" value="DNA primase, Toprim domain"/>
    <property type="match status" value="1"/>
</dbReference>
<dbReference type="Gene3D" id="3.40.1360.10">
    <property type="match status" value="1"/>
</dbReference>
<dbReference type="InterPro" id="IPR006171">
    <property type="entry name" value="TOPRIM_dom"/>
</dbReference>
<dbReference type="InterPro" id="IPR034141">
    <property type="entry name" value="TOPRIM_RNase_M5-like"/>
</dbReference>
<dbReference type="PANTHER" id="PTHR39156:SF2">
    <property type="entry name" value="DNA PRIMASE (BACTERIAL TYPE) AND SMALL PRIMASE-LIKE PROTEINS"/>
    <property type="match status" value="1"/>
</dbReference>
<dbReference type="PANTHER" id="PTHR39156">
    <property type="entry name" value="RIBONUCLEASE M5"/>
    <property type="match status" value="1"/>
</dbReference>
<dbReference type="Pfam" id="PF01751">
    <property type="entry name" value="Toprim"/>
    <property type="match status" value="1"/>
</dbReference>
<dbReference type="SMART" id="SM00493">
    <property type="entry name" value="TOPRIM"/>
    <property type="match status" value="1"/>
</dbReference>
<dbReference type="SUPFAM" id="SSF110455">
    <property type="entry name" value="Toprim domain"/>
    <property type="match status" value="1"/>
</dbReference>
<dbReference type="PROSITE" id="PS50880">
    <property type="entry name" value="TOPRIM"/>
    <property type="match status" value="1"/>
</dbReference>
<reference key="1">
    <citation type="journal article" date="1997" name="Nature">
        <title>The complete genome sequence of the Gram-positive bacterium Bacillus subtilis.</title>
        <authorList>
            <person name="Kunst F."/>
            <person name="Ogasawara N."/>
            <person name="Moszer I."/>
            <person name="Albertini A.M."/>
            <person name="Alloni G."/>
            <person name="Azevedo V."/>
            <person name="Bertero M.G."/>
            <person name="Bessieres P."/>
            <person name="Bolotin A."/>
            <person name="Borchert S."/>
            <person name="Borriss R."/>
            <person name="Boursier L."/>
            <person name="Brans A."/>
            <person name="Braun M."/>
            <person name="Brignell S.C."/>
            <person name="Bron S."/>
            <person name="Brouillet S."/>
            <person name="Bruschi C.V."/>
            <person name="Caldwell B."/>
            <person name="Capuano V."/>
            <person name="Carter N.M."/>
            <person name="Choi S.-K."/>
            <person name="Codani J.-J."/>
            <person name="Connerton I.F."/>
            <person name="Cummings N.J."/>
            <person name="Daniel R.A."/>
            <person name="Denizot F."/>
            <person name="Devine K.M."/>
            <person name="Duesterhoeft A."/>
            <person name="Ehrlich S.D."/>
            <person name="Emmerson P.T."/>
            <person name="Entian K.-D."/>
            <person name="Errington J."/>
            <person name="Fabret C."/>
            <person name="Ferrari E."/>
            <person name="Foulger D."/>
            <person name="Fritz C."/>
            <person name="Fujita M."/>
            <person name="Fujita Y."/>
            <person name="Fuma S."/>
            <person name="Galizzi A."/>
            <person name="Galleron N."/>
            <person name="Ghim S.-Y."/>
            <person name="Glaser P."/>
            <person name="Goffeau A."/>
            <person name="Golightly E.J."/>
            <person name="Grandi G."/>
            <person name="Guiseppi G."/>
            <person name="Guy B.J."/>
            <person name="Haga K."/>
            <person name="Haiech J."/>
            <person name="Harwood C.R."/>
            <person name="Henaut A."/>
            <person name="Hilbert H."/>
            <person name="Holsappel S."/>
            <person name="Hosono S."/>
            <person name="Hullo M.-F."/>
            <person name="Itaya M."/>
            <person name="Jones L.-M."/>
            <person name="Joris B."/>
            <person name="Karamata D."/>
            <person name="Kasahara Y."/>
            <person name="Klaerr-Blanchard M."/>
            <person name="Klein C."/>
            <person name="Kobayashi Y."/>
            <person name="Koetter P."/>
            <person name="Koningstein G."/>
            <person name="Krogh S."/>
            <person name="Kumano M."/>
            <person name="Kurita K."/>
            <person name="Lapidus A."/>
            <person name="Lardinois S."/>
            <person name="Lauber J."/>
            <person name="Lazarevic V."/>
            <person name="Lee S.-M."/>
            <person name="Levine A."/>
            <person name="Liu H."/>
            <person name="Masuda S."/>
            <person name="Mauel C."/>
            <person name="Medigue C."/>
            <person name="Medina N."/>
            <person name="Mellado R.P."/>
            <person name="Mizuno M."/>
            <person name="Moestl D."/>
            <person name="Nakai S."/>
            <person name="Noback M."/>
            <person name="Noone D."/>
            <person name="O'Reilly M."/>
            <person name="Ogawa K."/>
            <person name="Ogiwara A."/>
            <person name="Oudega B."/>
            <person name="Park S.-H."/>
            <person name="Parro V."/>
            <person name="Pohl T.M."/>
            <person name="Portetelle D."/>
            <person name="Porwollik S."/>
            <person name="Prescott A.M."/>
            <person name="Presecan E."/>
            <person name="Pujic P."/>
            <person name="Purnelle B."/>
            <person name="Rapoport G."/>
            <person name="Rey M."/>
            <person name="Reynolds S."/>
            <person name="Rieger M."/>
            <person name="Rivolta C."/>
            <person name="Rocha E."/>
            <person name="Roche B."/>
            <person name="Rose M."/>
            <person name="Sadaie Y."/>
            <person name="Sato T."/>
            <person name="Scanlan E."/>
            <person name="Schleich S."/>
            <person name="Schroeter R."/>
            <person name="Scoffone F."/>
            <person name="Sekiguchi J."/>
            <person name="Sekowska A."/>
            <person name="Seror S.J."/>
            <person name="Serror P."/>
            <person name="Shin B.-S."/>
            <person name="Soldo B."/>
            <person name="Sorokin A."/>
            <person name="Tacconi E."/>
            <person name="Takagi T."/>
            <person name="Takahashi H."/>
            <person name="Takemaru K."/>
            <person name="Takeuchi M."/>
            <person name="Tamakoshi A."/>
            <person name="Tanaka T."/>
            <person name="Terpstra P."/>
            <person name="Tognoni A."/>
            <person name="Tosato V."/>
            <person name="Uchiyama S."/>
            <person name="Vandenbol M."/>
            <person name="Vannier F."/>
            <person name="Vassarotti A."/>
            <person name="Viari A."/>
            <person name="Wambutt R."/>
            <person name="Wedler E."/>
            <person name="Wedler H."/>
            <person name="Weitzenegger T."/>
            <person name="Winters P."/>
            <person name="Wipat A."/>
            <person name="Yamamoto H."/>
            <person name="Yamane K."/>
            <person name="Yasumoto K."/>
            <person name="Yata K."/>
            <person name="Yoshida K."/>
            <person name="Yoshikawa H.-F."/>
            <person name="Zumstein E."/>
            <person name="Yoshikawa H."/>
            <person name="Danchin A."/>
        </authorList>
    </citation>
    <scope>NUCLEOTIDE SEQUENCE [LARGE SCALE GENOMIC DNA]</scope>
    <source>
        <strain>168</strain>
    </source>
</reference>
<name>YUSF_BACSU</name>
<sequence length="146" mass="16889">MLAVNFTAFFYNLNISNLTRQVNKMKMDELEKVMIVEGKSDKEKIESVLNEPMRIICTNGTISQLRLEELADELYDKDVYILVDADESGEKLRKQLKREFNEACHLHVDRAYKEVAAAPRHHIASVLLRANLNVHTIFLERKSRGV</sequence>
<organism>
    <name type="scientific">Bacillus subtilis (strain 168)</name>
    <dbReference type="NCBI Taxonomy" id="224308"/>
    <lineage>
        <taxon>Bacteria</taxon>
        <taxon>Bacillati</taxon>
        <taxon>Bacillota</taxon>
        <taxon>Bacilli</taxon>
        <taxon>Bacillales</taxon>
        <taxon>Bacillaceae</taxon>
        <taxon>Bacillus</taxon>
    </lineage>
</organism>
<gene>
    <name type="primary">yusF</name>
    <name type="ordered locus">BSU32780</name>
</gene>
<keyword id="KW-1185">Reference proteome</keyword>
<proteinExistence type="predicted"/>
<evidence type="ECO:0000255" key="1">
    <source>
        <dbReference type="PROSITE-ProRule" id="PRU00995"/>
    </source>
</evidence>